<protein>
    <recommendedName>
        <fullName evidence="1">Probable cell division protein WhiA</fullName>
    </recommendedName>
</protein>
<dbReference type="EMBL" id="AE017283">
    <property type="protein sequence ID" value="AAT82571.1"/>
    <property type="molecule type" value="Genomic_DNA"/>
</dbReference>
<dbReference type="RefSeq" id="WP_002515546.1">
    <property type="nucleotide sequence ID" value="NZ_CP025935.1"/>
</dbReference>
<dbReference type="SMR" id="Q6A9J5"/>
<dbReference type="EnsemblBacteria" id="AAT82571">
    <property type="protein sequence ID" value="AAT82571"/>
    <property type="gene ID" value="PPA0815"/>
</dbReference>
<dbReference type="GeneID" id="92856796"/>
<dbReference type="KEGG" id="pac:PPA0815"/>
<dbReference type="eggNOG" id="COG1481">
    <property type="taxonomic scope" value="Bacteria"/>
</dbReference>
<dbReference type="HOGENOM" id="CLU_053282_0_0_11"/>
<dbReference type="Proteomes" id="UP000000603">
    <property type="component" value="Chromosome"/>
</dbReference>
<dbReference type="GO" id="GO:0003677">
    <property type="term" value="F:DNA binding"/>
    <property type="evidence" value="ECO:0007669"/>
    <property type="project" value="UniProtKB-UniRule"/>
</dbReference>
<dbReference type="GO" id="GO:0051301">
    <property type="term" value="P:cell division"/>
    <property type="evidence" value="ECO:0007669"/>
    <property type="project" value="UniProtKB-UniRule"/>
</dbReference>
<dbReference type="GO" id="GO:0043937">
    <property type="term" value="P:regulation of sporulation"/>
    <property type="evidence" value="ECO:0007669"/>
    <property type="project" value="InterPro"/>
</dbReference>
<dbReference type="FunFam" id="3.10.28.10:FF:000001">
    <property type="entry name" value="Probable cell division protein WhiA"/>
    <property type="match status" value="1"/>
</dbReference>
<dbReference type="Gene3D" id="3.10.28.10">
    <property type="entry name" value="Homing endonucleases"/>
    <property type="match status" value="1"/>
</dbReference>
<dbReference type="HAMAP" id="MF_01420">
    <property type="entry name" value="HTH_type_WhiA"/>
    <property type="match status" value="1"/>
</dbReference>
<dbReference type="InterPro" id="IPR027434">
    <property type="entry name" value="Homing_endonucl"/>
</dbReference>
<dbReference type="InterPro" id="IPR018478">
    <property type="entry name" value="Sporu_reg_WhiA_N_dom"/>
</dbReference>
<dbReference type="InterPro" id="IPR003802">
    <property type="entry name" value="Sporulation_regulator_WhiA"/>
</dbReference>
<dbReference type="InterPro" id="IPR023054">
    <property type="entry name" value="Sporulation_regulator_WhiA_C"/>
</dbReference>
<dbReference type="InterPro" id="IPR039518">
    <property type="entry name" value="WhiA_LAGLIDADG_dom"/>
</dbReference>
<dbReference type="NCBIfam" id="TIGR00647">
    <property type="entry name" value="DNA_bind_WhiA"/>
    <property type="match status" value="1"/>
</dbReference>
<dbReference type="PANTHER" id="PTHR37307">
    <property type="entry name" value="CELL DIVISION PROTEIN WHIA-RELATED"/>
    <property type="match status" value="1"/>
</dbReference>
<dbReference type="PANTHER" id="PTHR37307:SF1">
    <property type="entry name" value="CELL DIVISION PROTEIN WHIA-RELATED"/>
    <property type="match status" value="1"/>
</dbReference>
<dbReference type="Pfam" id="PF02650">
    <property type="entry name" value="HTH_WhiA"/>
    <property type="match status" value="1"/>
</dbReference>
<dbReference type="Pfam" id="PF14527">
    <property type="entry name" value="LAGLIDADG_WhiA"/>
    <property type="match status" value="1"/>
</dbReference>
<dbReference type="Pfam" id="PF10298">
    <property type="entry name" value="WhiA_N"/>
    <property type="match status" value="1"/>
</dbReference>
<keyword id="KW-0131">Cell cycle</keyword>
<keyword id="KW-0132">Cell division</keyword>
<keyword id="KW-0238">DNA-binding</keyword>
<name>WHIA_CUTAK</name>
<feature type="chain" id="PRO_0000376545" description="Probable cell division protein WhiA">
    <location>
        <begin position="1"/>
        <end position="329"/>
    </location>
</feature>
<feature type="DNA-binding region" description="H-T-H motif" evidence="1">
    <location>
        <begin position="276"/>
        <end position="309"/>
    </location>
</feature>
<feature type="region of interest" description="Disordered" evidence="2">
    <location>
        <begin position="308"/>
        <end position="329"/>
    </location>
</feature>
<feature type="compositionally biased region" description="Polar residues" evidence="2">
    <location>
        <begin position="309"/>
        <end position="318"/>
    </location>
</feature>
<organism>
    <name type="scientific">Cutibacterium acnes (strain DSM 16379 / KPA171202)</name>
    <name type="common">Propionibacterium acnes</name>
    <dbReference type="NCBI Taxonomy" id="267747"/>
    <lineage>
        <taxon>Bacteria</taxon>
        <taxon>Bacillati</taxon>
        <taxon>Actinomycetota</taxon>
        <taxon>Actinomycetes</taxon>
        <taxon>Propionibacteriales</taxon>
        <taxon>Propionibacteriaceae</taxon>
        <taxon>Cutibacterium</taxon>
    </lineage>
</organism>
<sequence>MALTLQVKNELATVPVQKLCCRRSEIAATLRFAGGIHLVQHRHLTIEAEVDTGGAARRLRQSIQEVFGFDTDLVVVNGAGLHSNTRYLIRMVRGGADLARLTGLLDRRGRPVRGLPVPIVGGGRCCQAAAWRGAFLARGSLTEPGRSMAMEITAPGEEAAMALVGAARRLDITAKQRESRHVDRVTIRDGDAISAMLTRMGAHESVLAWEDRRLRREVRASANRLANFDDANLRRSARAAVTASARVERALEILGDSVPDHLRAAGRLRLEHRNASLEELGKVHEPPLTKDAIAGRIRRLLALADKTARSNGEPTTLESLPVEMRDDRG</sequence>
<accession>Q6A9J5</accession>
<evidence type="ECO:0000255" key="1">
    <source>
        <dbReference type="HAMAP-Rule" id="MF_01420"/>
    </source>
</evidence>
<evidence type="ECO:0000256" key="2">
    <source>
        <dbReference type="SAM" id="MobiDB-lite"/>
    </source>
</evidence>
<proteinExistence type="inferred from homology"/>
<gene>
    <name evidence="1" type="primary">whiA</name>
    <name type="ordered locus">PPA0815</name>
</gene>
<comment type="function">
    <text evidence="1">Involved in cell division and chromosome segregation.</text>
</comment>
<comment type="similarity">
    <text evidence="1">Belongs to the WhiA family.</text>
</comment>
<reference key="1">
    <citation type="journal article" date="2004" name="Science">
        <title>The complete genome sequence of Propionibacterium acnes, a commensal of human skin.</title>
        <authorList>
            <person name="Brueggemann H."/>
            <person name="Henne A."/>
            <person name="Hoster F."/>
            <person name="Liesegang H."/>
            <person name="Wiezer A."/>
            <person name="Strittmatter A."/>
            <person name="Hujer S."/>
            <person name="Duerre P."/>
            <person name="Gottschalk G."/>
        </authorList>
    </citation>
    <scope>NUCLEOTIDE SEQUENCE [LARGE SCALE GENOMIC DNA]</scope>
    <source>
        <strain>DSM 16379 / KPA171202</strain>
    </source>
</reference>